<feature type="chain" id="PRO_0000319396" description="Putative cellulose synthase-like protein D5">
    <location>
        <begin position="1"/>
        <end position="1012"/>
    </location>
</feature>
<feature type="transmembrane region" description="Helical" evidence="1">
    <location>
        <begin position="150"/>
        <end position="170"/>
    </location>
</feature>
<feature type="transmembrane region" description="Helical" evidence="1">
    <location>
        <begin position="180"/>
        <end position="200"/>
    </location>
</feature>
<feature type="transmembrane region" description="Helical" evidence="1">
    <location>
        <begin position="799"/>
        <end position="819"/>
    </location>
</feature>
<feature type="transmembrane region" description="Helical" evidence="1">
    <location>
        <begin position="825"/>
        <end position="845"/>
    </location>
</feature>
<feature type="transmembrane region" description="Helical" evidence="1">
    <location>
        <begin position="871"/>
        <end position="891"/>
    </location>
</feature>
<feature type="transmembrane region" description="Helical" evidence="1">
    <location>
        <begin position="914"/>
        <end position="934"/>
    </location>
</feature>
<feature type="transmembrane region" description="Helical" evidence="1">
    <location>
        <begin position="948"/>
        <end position="968"/>
    </location>
</feature>
<feature type="transmembrane region" description="Helical" evidence="1">
    <location>
        <begin position="978"/>
        <end position="998"/>
    </location>
</feature>
<feature type="region of interest" description="Disordered" evidence="2">
    <location>
        <begin position="1"/>
        <end position="85"/>
    </location>
</feature>
<feature type="region of interest" description="Disordered" evidence="2">
    <location>
        <begin position="597"/>
        <end position="620"/>
    </location>
</feature>
<feature type="compositionally biased region" description="Low complexity" evidence="2">
    <location>
        <begin position="20"/>
        <end position="37"/>
    </location>
</feature>
<feature type="compositionally biased region" description="Basic and acidic residues" evidence="2">
    <location>
        <begin position="57"/>
        <end position="69"/>
    </location>
</feature>
<feature type="compositionally biased region" description="Gly residues" evidence="2">
    <location>
        <begin position="606"/>
        <end position="618"/>
    </location>
</feature>
<feature type="active site" evidence="1">
    <location>
        <position position="280"/>
    </location>
</feature>
<feature type="active site" evidence="1">
    <location>
        <position position="717"/>
    </location>
</feature>
<reference key="1">
    <citation type="journal article" date="2005" name="PLoS Biol.">
        <title>The genomes of Oryza sativa: a history of duplications.</title>
        <authorList>
            <person name="Yu J."/>
            <person name="Wang J."/>
            <person name="Lin W."/>
            <person name="Li S."/>
            <person name="Li H."/>
            <person name="Zhou J."/>
            <person name="Ni P."/>
            <person name="Dong W."/>
            <person name="Hu S."/>
            <person name="Zeng C."/>
            <person name="Zhang J."/>
            <person name="Zhang Y."/>
            <person name="Li R."/>
            <person name="Xu Z."/>
            <person name="Li S."/>
            <person name="Li X."/>
            <person name="Zheng H."/>
            <person name="Cong L."/>
            <person name="Lin L."/>
            <person name="Yin J."/>
            <person name="Geng J."/>
            <person name="Li G."/>
            <person name="Shi J."/>
            <person name="Liu J."/>
            <person name="Lv H."/>
            <person name="Li J."/>
            <person name="Wang J."/>
            <person name="Deng Y."/>
            <person name="Ran L."/>
            <person name="Shi X."/>
            <person name="Wang X."/>
            <person name="Wu Q."/>
            <person name="Li C."/>
            <person name="Ren X."/>
            <person name="Wang J."/>
            <person name="Wang X."/>
            <person name="Li D."/>
            <person name="Liu D."/>
            <person name="Zhang X."/>
            <person name="Ji Z."/>
            <person name="Zhao W."/>
            <person name="Sun Y."/>
            <person name="Zhang Z."/>
            <person name="Bao J."/>
            <person name="Han Y."/>
            <person name="Dong L."/>
            <person name="Ji J."/>
            <person name="Chen P."/>
            <person name="Wu S."/>
            <person name="Liu J."/>
            <person name="Xiao Y."/>
            <person name="Bu D."/>
            <person name="Tan J."/>
            <person name="Yang L."/>
            <person name="Ye C."/>
            <person name="Zhang J."/>
            <person name="Xu J."/>
            <person name="Zhou Y."/>
            <person name="Yu Y."/>
            <person name="Zhang B."/>
            <person name="Zhuang S."/>
            <person name="Wei H."/>
            <person name="Liu B."/>
            <person name="Lei M."/>
            <person name="Yu H."/>
            <person name="Li Y."/>
            <person name="Xu H."/>
            <person name="Wei S."/>
            <person name="He X."/>
            <person name="Fang L."/>
            <person name="Zhang Z."/>
            <person name="Zhang Y."/>
            <person name="Huang X."/>
            <person name="Su Z."/>
            <person name="Tong W."/>
            <person name="Li J."/>
            <person name="Tong Z."/>
            <person name="Li S."/>
            <person name="Ye J."/>
            <person name="Wang L."/>
            <person name="Fang L."/>
            <person name="Lei T."/>
            <person name="Chen C.-S."/>
            <person name="Chen H.-C."/>
            <person name="Xu Z."/>
            <person name="Li H."/>
            <person name="Huang H."/>
            <person name="Zhang F."/>
            <person name="Xu H."/>
            <person name="Li N."/>
            <person name="Zhao C."/>
            <person name="Li S."/>
            <person name="Dong L."/>
            <person name="Huang Y."/>
            <person name="Li L."/>
            <person name="Xi Y."/>
            <person name="Qi Q."/>
            <person name="Li W."/>
            <person name="Zhang B."/>
            <person name="Hu W."/>
            <person name="Zhang Y."/>
            <person name="Tian X."/>
            <person name="Jiao Y."/>
            <person name="Liang X."/>
            <person name="Jin J."/>
            <person name="Gao L."/>
            <person name="Zheng W."/>
            <person name="Hao B."/>
            <person name="Liu S.-M."/>
            <person name="Wang W."/>
            <person name="Yuan L."/>
            <person name="Cao M."/>
            <person name="McDermott J."/>
            <person name="Samudrala R."/>
            <person name="Wang J."/>
            <person name="Wong G.K.-S."/>
            <person name="Yang H."/>
        </authorList>
    </citation>
    <scope>NUCLEOTIDE SEQUENCE [LARGE SCALE GENOMIC DNA]</scope>
    <source>
        <strain>cv. 93-11</strain>
    </source>
</reference>
<reference key="2">
    <citation type="journal article" date="2002" name="Plant Physiol.">
        <title>Cellulose synthase-like genes of rice.</title>
        <authorList>
            <person name="Hazen S.P."/>
            <person name="Scott-Craig J.S."/>
            <person name="Walton J.D."/>
        </authorList>
    </citation>
    <scope>GENE FAMILY</scope>
    <scope>NOMENCLATURE</scope>
</reference>
<evidence type="ECO:0000255" key="1"/>
<evidence type="ECO:0000256" key="2">
    <source>
        <dbReference type="SAM" id="MobiDB-lite"/>
    </source>
</evidence>
<evidence type="ECO:0000305" key="3"/>
<gene>
    <name type="primary">CSLD5</name>
    <name type="ORF">OsI_022026</name>
</gene>
<protein>
    <recommendedName>
        <fullName>Putative cellulose synthase-like protein D5</fullName>
        <ecNumber>2.4.1.-</ecNumber>
    </recommendedName>
    <alternativeName>
        <fullName>OsCslD5</fullName>
    </alternativeName>
</protein>
<comment type="function">
    <text>Thought to be a Golgi-localized beta-glycan synthase that polymerize the backbones of noncellulosic polysaccharides (hemicelluloses) of plant cell wall.</text>
</comment>
<comment type="subcellular location">
    <subcellularLocation>
        <location evidence="3">Golgi apparatus membrane</location>
        <topology evidence="3">Multi-pass membrane protein</topology>
    </subcellularLocation>
</comment>
<comment type="similarity">
    <text evidence="3">Belongs to the glycosyltransferase 2 family. Plant cellulose synthase-like D subfamily.</text>
</comment>
<sequence>MSGDYANYTVLMPPTPDNQPSGGAPPAAPSAGGARPGDLPLPPYGSSSSSRLVNRRGGGDDGAKMDRRLSTARVPAPSSNKSLLVRSQTGDFDHNRWLFETKGTYGIGNAYWPQDNVYGDDGGGGAVKMEDLVEKPWKPLSRKVPIPPGILSPYRLLVLVRFVALFLFLVWRVTNPNMDALWLWGISIVCEFWFAFSWLLDQMPKLNPINRAADLAALKEKFESPSPTNPTGRSDLPGLDVFISTADPYKEPTLVTANTLLSILATEYPVEKLFVYISDDGGALLTFESMAEACAFAKVWVPFCRKHSIEPRNPDSYFTQKGDPTKGKKRPDFVKDRRWIKREYDEFKIRVNSLPDLIRRRANALNARERKLARDKQAAGDADALASVKAATWMADGTHWPGTWLDPSPDHAKGDHASIVQVMIKNPHHDVVYGEAGDHPYLDMTDVDMRIPMFAYLSREKRAGYDHNKKAGAMNAMVRASAILSNGPFMLNFDCDHYIYNCQAIREAMCYMLDRGGDRICYIQFPQRFEGIDPSDRYANHNTVFFDGNMRALDGLQGPMYVGTGCLFRRYAIYGFNPPRAIEYRGTYGQTKVPIDPRQGSEAMPGAGGGRSGGGSVGGDHELQALSTAHPDHEAPQKFGKSKMFIESIAVAEYQGRPLQDHPSVLNGRPPGALLMPRPPLDAATVAESVSVISCWYEDNTEWGQRVGWIYGSVTEDVVTGYRMHNRGWRSVYCITRRDAFRGTAPINLTDRLHQVLRWATGSVEIFFSKNNAVLASRRLKFLQRMAYLNVGIYPFTSLFLIMYCLLPALSLFSGQFIVATLDPTFLSYLLLITITLMLLCLLEVKWSGIGLEEWWRNEQFWVIGGTSAHLAAVLQGLLKVVAGIEISFTLTAKAAAEDDDDPFAELYLIKWTSLFIPPLAVIGINIIALVVGVSRTVYAEIPQYSKLLGGGFFSFWVLAHYYPFAKGLMGRRGRTPTIVYVWAGLISITVSLLWITISPPDDSVAQGGIDV</sequence>
<accession>A2YCI3</accession>
<proteinExistence type="inferred from homology"/>
<dbReference type="EC" id="2.4.1.-"/>
<dbReference type="EMBL" id="CM000131">
    <property type="protein sequence ID" value="EAZ00794.1"/>
    <property type="molecule type" value="Genomic_DNA"/>
</dbReference>
<dbReference type="SMR" id="A2YCI3"/>
<dbReference type="STRING" id="39946.A2YCI3"/>
<dbReference type="EnsemblPlants" id="BGIOSGA022838-TA">
    <property type="protein sequence ID" value="BGIOSGA022838-PA"/>
    <property type="gene ID" value="BGIOSGA022838"/>
</dbReference>
<dbReference type="EnsemblPlants" id="OsGoSa_06g0016250.01">
    <property type="protein sequence ID" value="OsGoSa_06g0016250.01"/>
    <property type="gene ID" value="OsGoSa_06g0016250"/>
</dbReference>
<dbReference type="EnsemblPlants" id="OsIR64_06g0016230.01">
    <property type="protein sequence ID" value="OsIR64_06g0016230.01"/>
    <property type="gene ID" value="OsIR64_06g0016230"/>
</dbReference>
<dbReference type="EnsemblPlants" id="OsKYG_06g0016580.01">
    <property type="protein sequence ID" value="OsKYG_06g0016580.01"/>
    <property type="gene ID" value="OsKYG_06g0016580"/>
</dbReference>
<dbReference type="EnsemblPlants" id="OsLaMu_06g0016390.01">
    <property type="protein sequence ID" value="OsLaMu_06g0016390.01"/>
    <property type="gene ID" value="OsLaMu_06g0016390"/>
</dbReference>
<dbReference type="EnsemblPlants" id="OsLima_06g0016600.01">
    <property type="protein sequence ID" value="OsLima_06g0016600.01"/>
    <property type="gene ID" value="OsLima_06g0016600"/>
</dbReference>
<dbReference type="EnsemblPlants" id="OsLiXu_06g0016940.01">
    <property type="protein sequence ID" value="OsLiXu_06g0016940.01"/>
    <property type="gene ID" value="OsLiXu_06g0016940"/>
</dbReference>
<dbReference type="EnsemblPlants" id="OsMH63_06G016360_01">
    <property type="protein sequence ID" value="OsMH63_06G016360_01"/>
    <property type="gene ID" value="OsMH63_06G016360"/>
</dbReference>
<dbReference type="EnsemblPlants" id="OsPr106_06g0016760.01">
    <property type="protein sequence ID" value="OsPr106_06g0016760.01"/>
    <property type="gene ID" value="OsPr106_06g0016760"/>
</dbReference>
<dbReference type="EnsemblPlants" id="OsZS97_06G016690_01">
    <property type="protein sequence ID" value="OsZS97_06G016690_01"/>
    <property type="gene ID" value="OsZS97_06G016690"/>
</dbReference>
<dbReference type="Gramene" id="BGIOSGA022838-TA">
    <property type="protein sequence ID" value="BGIOSGA022838-PA"/>
    <property type="gene ID" value="BGIOSGA022838"/>
</dbReference>
<dbReference type="Gramene" id="OsGoSa_06g0016250.01">
    <property type="protein sequence ID" value="OsGoSa_06g0016250.01"/>
    <property type="gene ID" value="OsGoSa_06g0016250"/>
</dbReference>
<dbReference type="Gramene" id="OsIR64_06g0016230.01">
    <property type="protein sequence ID" value="OsIR64_06g0016230.01"/>
    <property type="gene ID" value="OsIR64_06g0016230"/>
</dbReference>
<dbReference type="Gramene" id="OsKYG_06g0016580.01">
    <property type="protein sequence ID" value="OsKYG_06g0016580.01"/>
    <property type="gene ID" value="OsKYG_06g0016580"/>
</dbReference>
<dbReference type="Gramene" id="OsLaMu_06g0016390.01">
    <property type="protein sequence ID" value="OsLaMu_06g0016390.01"/>
    <property type="gene ID" value="OsLaMu_06g0016390"/>
</dbReference>
<dbReference type="Gramene" id="OsLima_06g0016600.01">
    <property type="protein sequence ID" value="OsLima_06g0016600.01"/>
    <property type="gene ID" value="OsLima_06g0016600"/>
</dbReference>
<dbReference type="Gramene" id="OsLiXu_06g0016940.01">
    <property type="protein sequence ID" value="OsLiXu_06g0016940.01"/>
    <property type="gene ID" value="OsLiXu_06g0016940"/>
</dbReference>
<dbReference type="Gramene" id="OsMH63_06G016360_01">
    <property type="protein sequence ID" value="OsMH63_06G016360_01"/>
    <property type="gene ID" value="OsMH63_06G016360"/>
</dbReference>
<dbReference type="Gramene" id="OsPr106_06g0016760.01">
    <property type="protein sequence ID" value="OsPr106_06g0016760.01"/>
    <property type="gene ID" value="OsPr106_06g0016760"/>
</dbReference>
<dbReference type="Gramene" id="OsZS97_06G016690_01">
    <property type="protein sequence ID" value="OsZS97_06G016690_01"/>
    <property type="gene ID" value="OsZS97_06G016690"/>
</dbReference>
<dbReference type="HOGENOM" id="CLU_001418_1_0_1"/>
<dbReference type="OMA" id="IMSKVPD"/>
<dbReference type="OrthoDB" id="72851at2759"/>
<dbReference type="Proteomes" id="UP000007015">
    <property type="component" value="Chromosome 6"/>
</dbReference>
<dbReference type="GO" id="GO:0000139">
    <property type="term" value="C:Golgi membrane"/>
    <property type="evidence" value="ECO:0007669"/>
    <property type="project" value="UniProtKB-SubCell"/>
</dbReference>
<dbReference type="GO" id="GO:0016760">
    <property type="term" value="F:cellulose synthase (UDP-forming) activity"/>
    <property type="evidence" value="ECO:0007669"/>
    <property type="project" value="InterPro"/>
</dbReference>
<dbReference type="GO" id="GO:0071555">
    <property type="term" value="P:cell wall organization"/>
    <property type="evidence" value="ECO:0007669"/>
    <property type="project" value="UniProtKB-KW"/>
</dbReference>
<dbReference type="GO" id="GO:0030244">
    <property type="term" value="P:cellulose biosynthetic process"/>
    <property type="evidence" value="ECO:0007669"/>
    <property type="project" value="InterPro"/>
</dbReference>
<dbReference type="GO" id="GO:0071669">
    <property type="term" value="P:plant-type cell wall organization or biogenesis"/>
    <property type="evidence" value="ECO:0007669"/>
    <property type="project" value="UniProtKB-ARBA"/>
</dbReference>
<dbReference type="FunFam" id="3.90.550.10:FF:000027">
    <property type="entry name" value="Cellulose synthase-like protein D4"/>
    <property type="match status" value="1"/>
</dbReference>
<dbReference type="Gene3D" id="3.90.550.10">
    <property type="entry name" value="Spore Coat Polysaccharide Biosynthesis Protein SpsA, Chain A"/>
    <property type="match status" value="1"/>
</dbReference>
<dbReference type="InterPro" id="IPR005150">
    <property type="entry name" value="Cellulose_synth"/>
</dbReference>
<dbReference type="InterPro" id="IPR029044">
    <property type="entry name" value="Nucleotide-diphossugar_trans"/>
</dbReference>
<dbReference type="PANTHER" id="PTHR13301">
    <property type="entry name" value="X-BOX TRANSCRIPTION FACTOR-RELATED"/>
    <property type="match status" value="1"/>
</dbReference>
<dbReference type="Pfam" id="PF03552">
    <property type="entry name" value="Cellulose_synt"/>
    <property type="match status" value="1"/>
</dbReference>
<keyword id="KW-0961">Cell wall biogenesis/degradation</keyword>
<keyword id="KW-0328">Glycosyltransferase</keyword>
<keyword id="KW-0333">Golgi apparatus</keyword>
<keyword id="KW-0472">Membrane</keyword>
<keyword id="KW-1185">Reference proteome</keyword>
<keyword id="KW-0808">Transferase</keyword>
<keyword id="KW-0812">Transmembrane</keyword>
<keyword id="KW-1133">Transmembrane helix</keyword>
<organism>
    <name type="scientific">Oryza sativa subsp. indica</name>
    <name type="common">Rice</name>
    <dbReference type="NCBI Taxonomy" id="39946"/>
    <lineage>
        <taxon>Eukaryota</taxon>
        <taxon>Viridiplantae</taxon>
        <taxon>Streptophyta</taxon>
        <taxon>Embryophyta</taxon>
        <taxon>Tracheophyta</taxon>
        <taxon>Spermatophyta</taxon>
        <taxon>Magnoliopsida</taxon>
        <taxon>Liliopsida</taxon>
        <taxon>Poales</taxon>
        <taxon>Poaceae</taxon>
        <taxon>BOP clade</taxon>
        <taxon>Oryzoideae</taxon>
        <taxon>Oryzeae</taxon>
        <taxon>Oryzinae</taxon>
        <taxon>Oryza</taxon>
        <taxon>Oryza sativa</taxon>
    </lineage>
</organism>
<name>CSLD5_ORYSI</name>